<proteinExistence type="inferred from homology"/>
<comment type="subunit">
    <text evidence="1">Part of the 50S ribosomal subunit. Contacts protein L32.</text>
</comment>
<comment type="similarity">
    <text evidence="1">Belongs to the bacterial ribosomal protein bL17 family.</text>
</comment>
<accession>C4Z2V8</accession>
<reference key="1">
    <citation type="journal article" date="2009" name="Proc. Natl. Acad. Sci. U.S.A.">
        <title>Characterizing a model human gut microbiota composed of members of its two dominant bacterial phyla.</title>
        <authorList>
            <person name="Mahowald M.A."/>
            <person name="Rey F.E."/>
            <person name="Seedorf H."/>
            <person name="Turnbaugh P.J."/>
            <person name="Fulton R.S."/>
            <person name="Wollam A."/>
            <person name="Shah N."/>
            <person name="Wang C."/>
            <person name="Magrini V."/>
            <person name="Wilson R.K."/>
            <person name="Cantarel B.L."/>
            <person name="Coutinho P.M."/>
            <person name="Henrissat B."/>
            <person name="Crock L.W."/>
            <person name="Russell A."/>
            <person name="Verberkmoes N.C."/>
            <person name="Hettich R.L."/>
            <person name="Gordon J.I."/>
        </authorList>
    </citation>
    <scope>NUCLEOTIDE SEQUENCE [LARGE SCALE GENOMIC DNA]</scope>
    <source>
        <strain>ATCC 27750 / DSM 3376 / VPI C15-48 / C15-B4</strain>
    </source>
</reference>
<protein>
    <recommendedName>
        <fullName evidence="1">Large ribosomal subunit protein bL17</fullName>
    </recommendedName>
    <alternativeName>
        <fullName evidence="2">50S ribosomal protein L17</fullName>
    </alternativeName>
</protein>
<evidence type="ECO:0000255" key="1">
    <source>
        <dbReference type="HAMAP-Rule" id="MF_01368"/>
    </source>
</evidence>
<evidence type="ECO:0000305" key="2"/>
<dbReference type="EMBL" id="CP001104">
    <property type="protein sequence ID" value="ACR71363.1"/>
    <property type="molecule type" value="Genomic_DNA"/>
</dbReference>
<dbReference type="RefSeq" id="WP_012738600.1">
    <property type="nucleotide sequence ID" value="NC_012778.1"/>
</dbReference>
<dbReference type="SMR" id="C4Z2V8"/>
<dbReference type="STRING" id="515620.EUBELI_00327"/>
<dbReference type="GeneID" id="41355101"/>
<dbReference type="KEGG" id="eel:EUBELI_00327"/>
<dbReference type="eggNOG" id="COG0203">
    <property type="taxonomic scope" value="Bacteria"/>
</dbReference>
<dbReference type="HOGENOM" id="CLU_074407_2_2_9"/>
<dbReference type="Proteomes" id="UP000001476">
    <property type="component" value="Chromosome"/>
</dbReference>
<dbReference type="GO" id="GO:0022625">
    <property type="term" value="C:cytosolic large ribosomal subunit"/>
    <property type="evidence" value="ECO:0007669"/>
    <property type="project" value="TreeGrafter"/>
</dbReference>
<dbReference type="GO" id="GO:0003735">
    <property type="term" value="F:structural constituent of ribosome"/>
    <property type="evidence" value="ECO:0007669"/>
    <property type="project" value="InterPro"/>
</dbReference>
<dbReference type="GO" id="GO:0006412">
    <property type="term" value="P:translation"/>
    <property type="evidence" value="ECO:0007669"/>
    <property type="project" value="UniProtKB-UniRule"/>
</dbReference>
<dbReference type="Gene3D" id="3.90.1030.10">
    <property type="entry name" value="Ribosomal protein L17"/>
    <property type="match status" value="2"/>
</dbReference>
<dbReference type="HAMAP" id="MF_01368">
    <property type="entry name" value="Ribosomal_bL17"/>
    <property type="match status" value="1"/>
</dbReference>
<dbReference type="InterPro" id="IPR000456">
    <property type="entry name" value="Ribosomal_bL17"/>
</dbReference>
<dbReference type="InterPro" id="IPR036373">
    <property type="entry name" value="Ribosomal_bL17_sf"/>
</dbReference>
<dbReference type="PANTHER" id="PTHR14413:SF16">
    <property type="entry name" value="LARGE RIBOSOMAL SUBUNIT PROTEIN BL17M"/>
    <property type="match status" value="1"/>
</dbReference>
<dbReference type="PANTHER" id="PTHR14413">
    <property type="entry name" value="RIBOSOMAL PROTEIN L17"/>
    <property type="match status" value="1"/>
</dbReference>
<dbReference type="Pfam" id="PF01196">
    <property type="entry name" value="Ribosomal_L17"/>
    <property type="match status" value="1"/>
</dbReference>
<dbReference type="SUPFAM" id="SSF64263">
    <property type="entry name" value="Prokaryotic ribosomal protein L17"/>
    <property type="match status" value="1"/>
</dbReference>
<keyword id="KW-1185">Reference proteome</keyword>
<keyword id="KW-0687">Ribonucleoprotein</keyword>
<keyword id="KW-0689">Ribosomal protein</keyword>
<organism>
    <name type="scientific">Lachnospira eligens (strain ATCC 27750 / DSM 3376 / VPI C15-48 / C15-B4)</name>
    <name type="common">Eubacterium eligens</name>
    <dbReference type="NCBI Taxonomy" id="515620"/>
    <lineage>
        <taxon>Bacteria</taxon>
        <taxon>Bacillati</taxon>
        <taxon>Bacillota</taxon>
        <taxon>Clostridia</taxon>
        <taxon>Lachnospirales</taxon>
        <taxon>Lachnospiraceae</taxon>
        <taxon>Lachnospira</taxon>
    </lineage>
</organism>
<name>RL17_LACE2</name>
<sequence length="178" mass="19899">MAKYRKLGRTSSQRKALLRSQVTALIENGKIVTTEARAKEVKKMAEKLITLAVKEKDNFETVKVSAKVPKKDAEGKRVKEVVDGKKVTVYETVEKEIKKDLPSRLHARKQMDKVLYTVTEVPTAAAGKKKNTKTVDLTNKLFDEIAPKYAGRQGGYTRIVKIGLRKGDAAMEVLLELV</sequence>
<feature type="chain" id="PRO_1000215006" description="Large ribosomal subunit protein bL17">
    <location>
        <begin position="1"/>
        <end position="178"/>
    </location>
</feature>
<gene>
    <name evidence="1" type="primary">rplQ</name>
    <name type="ordered locus">EUBELI_00327</name>
</gene>